<comment type="function">
    <text evidence="1">Catalyzes the formation of 4-diphosphocytidyl-2-C-methyl-D-erythritol from CTP and 2-C-methyl-D-erythritol 4-phosphate (MEP).</text>
</comment>
<comment type="catalytic activity">
    <reaction evidence="1">
        <text>2-C-methyl-D-erythritol 4-phosphate + CTP + H(+) = 4-CDP-2-C-methyl-D-erythritol + diphosphate</text>
        <dbReference type="Rhea" id="RHEA:13429"/>
        <dbReference type="ChEBI" id="CHEBI:15378"/>
        <dbReference type="ChEBI" id="CHEBI:33019"/>
        <dbReference type="ChEBI" id="CHEBI:37563"/>
        <dbReference type="ChEBI" id="CHEBI:57823"/>
        <dbReference type="ChEBI" id="CHEBI:58262"/>
        <dbReference type="EC" id="2.7.7.60"/>
    </reaction>
</comment>
<comment type="pathway">
    <text evidence="1">Isoprenoid biosynthesis; isopentenyl diphosphate biosynthesis via DXP pathway; isopentenyl diphosphate from 1-deoxy-D-xylulose 5-phosphate: step 2/6.</text>
</comment>
<comment type="subunit">
    <text evidence="1">Homodimer.</text>
</comment>
<comment type="similarity">
    <text evidence="1">Belongs to the IspD/TarI cytidylyltransferase family. IspD subfamily.</text>
</comment>
<keyword id="KW-0414">Isoprene biosynthesis</keyword>
<keyword id="KW-0548">Nucleotidyltransferase</keyword>
<keyword id="KW-0808">Transferase</keyword>
<reference key="1">
    <citation type="journal article" date="2009" name="PLoS Genet.">
        <title>Organised genome dynamics in the Escherichia coli species results in highly diverse adaptive paths.</title>
        <authorList>
            <person name="Touchon M."/>
            <person name="Hoede C."/>
            <person name="Tenaillon O."/>
            <person name="Barbe V."/>
            <person name="Baeriswyl S."/>
            <person name="Bidet P."/>
            <person name="Bingen E."/>
            <person name="Bonacorsi S."/>
            <person name="Bouchier C."/>
            <person name="Bouvet O."/>
            <person name="Calteau A."/>
            <person name="Chiapello H."/>
            <person name="Clermont O."/>
            <person name="Cruveiller S."/>
            <person name="Danchin A."/>
            <person name="Diard M."/>
            <person name="Dossat C."/>
            <person name="Karoui M.E."/>
            <person name="Frapy E."/>
            <person name="Garry L."/>
            <person name="Ghigo J.M."/>
            <person name="Gilles A.M."/>
            <person name="Johnson J."/>
            <person name="Le Bouguenec C."/>
            <person name="Lescat M."/>
            <person name="Mangenot S."/>
            <person name="Martinez-Jehanne V."/>
            <person name="Matic I."/>
            <person name="Nassif X."/>
            <person name="Oztas S."/>
            <person name="Petit M.A."/>
            <person name="Pichon C."/>
            <person name="Rouy Z."/>
            <person name="Ruf C.S."/>
            <person name="Schneider D."/>
            <person name="Tourret J."/>
            <person name="Vacherie B."/>
            <person name="Vallenet D."/>
            <person name="Medigue C."/>
            <person name="Rocha E.P.C."/>
            <person name="Denamur E."/>
        </authorList>
    </citation>
    <scope>NUCLEOTIDE SEQUENCE [LARGE SCALE GENOMIC DNA]</scope>
    <source>
        <strain>ED1a</strain>
    </source>
</reference>
<dbReference type="EC" id="2.7.7.60" evidence="1"/>
<dbReference type="EMBL" id="CU928162">
    <property type="protein sequence ID" value="CAR09219.1"/>
    <property type="molecule type" value="Genomic_DNA"/>
</dbReference>
<dbReference type="RefSeq" id="WP_000246149.1">
    <property type="nucleotide sequence ID" value="NC_011745.1"/>
</dbReference>
<dbReference type="SMR" id="B7MYQ2"/>
<dbReference type="KEGG" id="ecq:ECED1_3203"/>
<dbReference type="HOGENOM" id="CLU_061281_3_1_6"/>
<dbReference type="UniPathway" id="UPA00056">
    <property type="reaction ID" value="UER00093"/>
</dbReference>
<dbReference type="Proteomes" id="UP000000748">
    <property type="component" value="Chromosome"/>
</dbReference>
<dbReference type="GO" id="GO:0050518">
    <property type="term" value="F:2-C-methyl-D-erythritol 4-phosphate cytidylyltransferase activity"/>
    <property type="evidence" value="ECO:0007669"/>
    <property type="project" value="UniProtKB-UniRule"/>
</dbReference>
<dbReference type="GO" id="GO:0019288">
    <property type="term" value="P:isopentenyl diphosphate biosynthetic process, methylerythritol 4-phosphate pathway"/>
    <property type="evidence" value="ECO:0007669"/>
    <property type="project" value="UniProtKB-UniRule"/>
</dbReference>
<dbReference type="CDD" id="cd02516">
    <property type="entry name" value="CDP-ME_synthetase"/>
    <property type="match status" value="1"/>
</dbReference>
<dbReference type="FunFam" id="3.90.550.10:FF:000003">
    <property type="entry name" value="2-C-methyl-D-erythritol 4-phosphate cytidylyltransferase"/>
    <property type="match status" value="1"/>
</dbReference>
<dbReference type="Gene3D" id="3.90.550.10">
    <property type="entry name" value="Spore Coat Polysaccharide Biosynthesis Protein SpsA, Chain A"/>
    <property type="match status" value="1"/>
</dbReference>
<dbReference type="HAMAP" id="MF_00108">
    <property type="entry name" value="IspD"/>
    <property type="match status" value="1"/>
</dbReference>
<dbReference type="InterPro" id="IPR001228">
    <property type="entry name" value="IspD"/>
</dbReference>
<dbReference type="InterPro" id="IPR034683">
    <property type="entry name" value="IspD/TarI"/>
</dbReference>
<dbReference type="InterPro" id="IPR050088">
    <property type="entry name" value="IspD/TarI_cytidylyltransf_bact"/>
</dbReference>
<dbReference type="InterPro" id="IPR018294">
    <property type="entry name" value="ISPD_synthase_CS"/>
</dbReference>
<dbReference type="InterPro" id="IPR029044">
    <property type="entry name" value="Nucleotide-diphossugar_trans"/>
</dbReference>
<dbReference type="NCBIfam" id="TIGR00453">
    <property type="entry name" value="ispD"/>
    <property type="match status" value="1"/>
</dbReference>
<dbReference type="PANTHER" id="PTHR32125">
    <property type="entry name" value="2-C-METHYL-D-ERYTHRITOL 4-PHOSPHATE CYTIDYLYLTRANSFERASE, CHLOROPLASTIC"/>
    <property type="match status" value="1"/>
</dbReference>
<dbReference type="PANTHER" id="PTHR32125:SF4">
    <property type="entry name" value="2-C-METHYL-D-ERYTHRITOL 4-PHOSPHATE CYTIDYLYLTRANSFERASE, CHLOROPLASTIC"/>
    <property type="match status" value="1"/>
</dbReference>
<dbReference type="Pfam" id="PF01128">
    <property type="entry name" value="IspD"/>
    <property type="match status" value="1"/>
</dbReference>
<dbReference type="SUPFAM" id="SSF53448">
    <property type="entry name" value="Nucleotide-diphospho-sugar transferases"/>
    <property type="match status" value="1"/>
</dbReference>
<dbReference type="PROSITE" id="PS01295">
    <property type="entry name" value="ISPD"/>
    <property type="match status" value="1"/>
</dbReference>
<sequence>MATTHLDVCAVVPAAGFGRRMQTECPKQYLSIGNQTILEHSVHALLAHPRVKRVVIAISPGDSRFAQLPLANHPRITVVDGGEERADSVLAGLKAAGDAQWVLVHDAARPCLHQDDLARLLALSETSRTGGILAAPVRDTMKRAEPGKNAIAHTVDRNGLWHALTPQFFPRELLHDCLTRALNEGATITDEASALEYCGFHPQLVEGRADNIKVTRPEDLALAEFYLTRTIHQENT</sequence>
<gene>
    <name evidence="1" type="primary">ispD</name>
    <name type="ordered locus">ECED1_3203</name>
</gene>
<name>ISPD_ECO81</name>
<proteinExistence type="inferred from homology"/>
<organism>
    <name type="scientific">Escherichia coli O81 (strain ED1a)</name>
    <dbReference type="NCBI Taxonomy" id="585397"/>
    <lineage>
        <taxon>Bacteria</taxon>
        <taxon>Pseudomonadati</taxon>
        <taxon>Pseudomonadota</taxon>
        <taxon>Gammaproteobacteria</taxon>
        <taxon>Enterobacterales</taxon>
        <taxon>Enterobacteriaceae</taxon>
        <taxon>Escherichia</taxon>
    </lineage>
</organism>
<evidence type="ECO:0000255" key="1">
    <source>
        <dbReference type="HAMAP-Rule" id="MF_00108"/>
    </source>
</evidence>
<accession>B7MYQ2</accession>
<feature type="chain" id="PRO_1000191058" description="2-C-methyl-D-erythritol 4-phosphate cytidylyltransferase">
    <location>
        <begin position="1"/>
        <end position="236"/>
    </location>
</feature>
<feature type="site" description="Transition state stabilizer" evidence="1">
    <location>
        <position position="20"/>
    </location>
</feature>
<feature type="site" description="Transition state stabilizer" evidence="1">
    <location>
        <position position="27"/>
    </location>
</feature>
<feature type="site" description="Positions MEP for the nucleophilic attack" evidence="1">
    <location>
        <position position="157"/>
    </location>
</feature>
<feature type="site" description="Positions MEP for the nucleophilic attack" evidence="1">
    <location>
        <position position="213"/>
    </location>
</feature>
<protein>
    <recommendedName>
        <fullName evidence="1">2-C-methyl-D-erythritol 4-phosphate cytidylyltransferase</fullName>
        <ecNumber evidence="1">2.7.7.60</ecNumber>
    </recommendedName>
    <alternativeName>
        <fullName evidence="1">4-diphosphocytidyl-2C-methyl-D-erythritol synthase</fullName>
    </alternativeName>
    <alternativeName>
        <fullName evidence="1">MEP cytidylyltransferase</fullName>
        <shortName evidence="1">MCT</shortName>
    </alternativeName>
</protein>